<evidence type="ECO:0000255" key="1"/>
<evidence type="ECO:0000256" key="2">
    <source>
        <dbReference type="SAM" id="MobiDB-lite"/>
    </source>
</evidence>
<evidence type="ECO:0000305" key="3"/>
<sequence>MKFSTFVSLGLTAITALAAPTPSMIDVKRDVVKRAASLEDVATAERPLRCRPSASLPPPSRVTRLPLFSSLVLSRALATTSRSAATSPSSDRTARSCLRTSPSPSRVSRMLSFVTLPSRRSSVAMLSPSRRYELVTPKEITTYLHRLQSENVWVDHLDLSSDRDHDKDYYDGLLDITHAADFVTVTNTFLHDHWKASLIGHSDSNGAEDKGHLTVTYANNYLKNLNSRGRPSASAQATSTTTTTRTCRMVSTPARVRSCLFRTTFLSAPRRLFTRLMLDMLLSLATTSVMARTLPRRVL</sequence>
<proteinExistence type="inferred from homology"/>
<protein>
    <recommendedName>
        <fullName>Pectin lyase</fullName>
        <ecNumber>4.2.2.10</ecNumber>
    </recommendedName>
</protein>
<name>PELA_PEYPI</name>
<reference key="1">
    <citation type="submission" date="1995-05" db="EMBL/GenBank/DDBJ databases">
        <authorList>
            <person name="Heim P."/>
        </authorList>
    </citation>
    <scope>NUCLEOTIDE SEQUENCE [GENOMIC DNA]</scope>
    <source>
        <strain>DSM 62763 / Berkeley Bloxom</strain>
    </source>
</reference>
<keyword id="KW-0456">Lyase</keyword>
<keyword id="KW-0964">Secreted</keyword>
<keyword id="KW-0732">Signal</keyword>
<gene>
    <name type="primary">PELA</name>
</gene>
<dbReference type="EC" id="4.2.2.10"/>
<dbReference type="EMBL" id="X87580">
    <property type="protein sequence ID" value="CAA60884.1"/>
    <property type="molecule type" value="Genomic_DNA"/>
</dbReference>
<dbReference type="PIR" id="S55472">
    <property type="entry name" value="S55472"/>
</dbReference>
<dbReference type="SMR" id="Q12639"/>
<dbReference type="CAZy" id="PL1">
    <property type="family name" value="Polysaccharide Lyase Family 1"/>
</dbReference>
<dbReference type="GO" id="GO:0005576">
    <property type="term" value="C:extracellular region"/>
    <property type="evidence" value="ECO:0007669"/>
    <property type="project" value="UniProtKB-SubCell"/>
</dbReference>
<dbReference type="GO" id="GO:0030570">
    <property type="term" value="F:pectate lyase activity"/>
    <property type="evidence" value="ECO:0007669"/>
    <property type="project" value="InterPro"/>
</dbReference>
<dbReference type="GO" id="GO:0047490">
    <property type="term" value="F:pectin lyase activity"/>
    <property type="evidence" value="ECO:0007669"/>
    <property type="project" value="UniProtKB-EC"/>
</dbReference>
<dbReference type="Gene3D" id="2.160.20.10">
    <property type="entry name" value="Single-stranded right-handed beta-helix, Pectin lyase-like"/>
    <property type="match status" value="1"/>
</dbReference>
<dbReference type="InterPro" id="IPR002022">
    <property type="entry name" value="Pec_lyase"/>
</dbReference>
<dbReference type="InterPro" id="IPR012334">
    <property type="entry name" value="Pectin_lyas_fold"/>
</dbReference>
<dbReference type="InterPro" id="IPR011050">
    <property type="entry name" value="Pectin_lyase_fold/virulence"/>
</dbReference>
<dbReference type="InterPro" id="IPR045032">
    <property type="entry name" value="PEL"/>
</dbReference>
<dbReference type="PANTHER" id="PTHR31683">
    <property type="entry name" value="PECTATE LYASE 18-RELATED"/>
    <property type="match status" value="1"/>
</dbReference>
<dbReference type="PANTHER" id="PTHR31683:SF18">
    <property type="entry name" value="PECTATE LYASE 21-RELATED"/>
    <property type="match status" value="1"/>
</dbReference>
<dbReference type="Pfam" id="PF00544">
    <property type="entry name" value="Pectate_lyase_4"/>
    <property type="match status" value="1"/>
</dbReference>
<dbReference type="SMART" id="SM00656">
    <property type="entry name" value="Amb_all"/>
    <property type="match status" value="1"/>
</dbReference>
<dbReference type="SUPFAM" id="SSF51126">
    <property type="entry name" value="Pectin lyase-like"/>
    <property type="match status" value="1"/>
</dbReference>
<feature type="signal peptide" evidence="1">
    <location>
        <begin position="1"/>
        <end position="18"/>
    </location>
</feature>
<feature type="chain" id="PRO_0000024900" description="Pectin lyase">
    <location>
        <begin position="19"/>
        <end position="299"/>
    </location>
</feature>
<feature type="region of interest" description="Disordered" evidence="2">
    <location>
        <begin position="82"/>
        <end position="105"/>
    </location>
</feature>
<feature type="region of interest" description="Disordered" evidence="2">
    <location>
        <begin position="227"/>
        <end position="246"/>
    </location>
</feature>
<feature type="compositionally biased region" description="Low complexity" evidence="2">
    <location>
        <begin position="82"/>
        <end position="91"/>
    </location>
</feature>
<feature type="compositionally biased region" description="Low complexity" evidence="2">
    <location>
        <begin position="232"/>
        <end position="246"/>
    </location>
</feature>
<comment type="catalytic activity">
    <reaction>
        <text>Eliminative cleavage of (1-&gt;4)-alpha-D-galacturonan methyl ester to give oligosaccharides with 4-deoxy-6-O-methyl-alpha-D-galact-4-enuronosyl groups at their non-reducing ends.</text>
        <dbReference type="EC" id="4.2.2.10"/>
    </reaction>
</comment>
<comment type="subcellular location">
    <subcellularLocation>
        <location evidence="3">Secreted</location>
    </subcellularLocation>
</comment>
<comment type="similarity">
    <text evidence="3">Belongs to the polysaccharide lyase 1 family.</text>
</comment>
<organism>
    <name type="scientific">Peyronellaea pinodes</name>
    <name type="common">Pea foot rot fungus</name>
    <name type="synonym">Mycosphaerella pinodes</name>
    <dbReference type="NCBI Taxonomy" id="749589"/>
    <lineage>
        <taxon>Eukaryota</taxon>
        <taxon>Fungi</taxon>
        <taxon>Dikarya</taxon>
        <taxon>Ascomycota</taxon>
        <taxon>Pezizomycotina</taxon>
        <taxon>Dothideomycetes</taxon>
        <taxon>Pleosporomycetidae</taxon>
        <taxon>Pleosporales</taxon>
        <taxon>Pleosporineae</taxon>
        <taxon>Didymellaceae</taxon>
        <taxon>Didymella</taxon>
    </lineage>
</organism>
<accession>Q12639</accession>